<protein>
    <recommendedName>
        <fullName evidence="1">UPF0260 protein YPO2083/y2228/YP_1926</fullName>
    </recommendedName>
</protein>
<comment type="similarity">
    <text evidence="1">Belongs to the UPF0260 family.</text>
</comment>
<evidence type="ECO:0000255" key="1">
    <source>
        <dbReference type="HAMAP-Rule" id="MF_00676"/>
    </source>
</evidence>
<reference key="1">
    <citation type="journal article" date="2001" name="Nature">
        <title>Genome sequence of Yersinia pestis, the causative agent of plague.</title>
        <authorList>
            <person name="Parkhill J."/>
            <person name="Wren B.W."/>
            <person name="Thomson N.R."/>
            <person name="Titball R.W."/>
            <person name="Holden M.T.G."/>
            <person name="Prentice M.B."/>
            <person name="Sebaihia M."/>
            <person name="James K.D."/>
            <person name="Churcher C.M."/>
            <person name="Mungall K.L."/>
            <person name="Baker S."/>
            <person name="Basham D."/>
            <person name="Bentley S.D."/>
            <person name="Brooks K."/>
            <person name="Cerdeno-Tarraga A.-M."/>
            <person name="Chillingworth T."/>
            <person name="Cronin A."/>
            <person name="Davies R.M."/>
            <person name="Davis P."/>
            <person name="Dougan G."/>
            <person name="Feltwell T."/>
            <person name="Hamlin N."/>
            <person name="Holroyd S."/>
            <person name="Jagels K."/>
            <person name="Karlyshev A.V."/>
            <person name="Leather S."/>
            <person name="Moule S."/>
            <person name="Oyston P.C.F."/>
            <person name="Quail M.A."/>
            <person name="Rutherford K.M."/>
            <person name="Simmonds M."/>
            <person name="Skelton J."/>
            <person name="Stevens K."/>
            <person name="Whitehead S."/>
            <person name="Barrell B.G."/>
        </authorList>
    </citation>
    <scope>NUCLEOTIDE SEQUENCE [LARGE SCALE GENOMIC DNA]</scope>
    <source>
        <strain>CO-92 / Biovar Orientalis</strain>
    </source>
</reference>
<reference key="2">
    <citation type="journal article" date="2002" name="J. Bacteriol.">
        <title>Genome sequence of Yersinia pestis KIM.</title>
        <authorList>
            <person name="Deng W."/>
            <person name="Burland V."/>
            <person name="Plunkett G. III"/>
            <person name="Boutin A."/>
            <person name="Mayhew G.F."/>
            <person name="Liss P."/>
            <person name="Perna N.T."/>
            <person name="Rose D.J."/>
            <person name="Mau B."/>
            <person name="Zhou S."/>
            <person name="Schwartz D.C."/>
            <person name="Fetherston J.D."/>
            <person name="Lindler L.E."/>
            <person name="Brubaker R.R."/>
            <person name="Plano G.V."/>
            <person name="Straley S.C."/>
            <person name="McDonough K.A."/>
            <person name="Nilles M.L."/>
            <person name="Matson J.S."/>
            <person name="Blattner F.R."/>
            <person name="Perry R.D."/>
        </authorList>
    </citation>
    <scope>NUCLEOTIDE SEQUENCE [LARGE SCALE GENOMIC DNA]</scope>
    <source>
        <strain>KIM10+ / Biovar Mediaevalis</strain>
    </source>
</reference>
<reference key="3">
    <citation type="journal article" date="2004" name="DNA Res.">
        <title>Complete genome sequence of Yersinia pestis strain 91001, an isolate avirulent to humans.</title>
        <authorList>
            <person name="Song Y."/>
            <person name="Tong Z."/>
            <person name="Wang J."/>
            <person name="Wang L."/>
            <person name="Guo Z."/>
            <person name="Han Y."/>
            <person name="Zhang J."/>
            <person name="Pei D."/>
            <person name="Zhou D."/>
            <person name="Qin H."/>
            <person name="Pang X."/>
            <person name="Han Y."/>
            <person name="Zhai J."/>
            <person name="Li M."/>
            <person name="Cui B."/>
            <person name="Qi Z."/>
            <person name="Jin L."/>
            <person name="Dai R."/>
            <person name="Chen F."/>
            <person name="Li S."/>
            <person name="Ye C."/>
            <person name="Du Z."/>
            <person name="Lin W."/>
            <person name="Wang J."/>
            <person name="Yu J."/>
            <person name="Yang H."/>
            <person name="Wang J."/>
            <person name="Huang P."/>
            <person name="Yang R."/>
        </authorList>
    </citation>
    <scope>NUCLEOTIDE SEQUENCE [LARGE SCALE GENOMIC DNA]</scope>
    <source>
        <strain>91001 / Biovar Mediaevalis</strain>
    </source>
</reference>
<accession>Q8ZES0</accession>
<accession>Q0WF73</accession>
<keyword id="KW-1185">Reference proteome</keyword>
<sequence>MSQPPFWQQKTLAEMSDSEWESLCDGCGQCCLNKLIDEDTDEIYFTNVACDQLNIKTCQCSNYERRFELEEDCIKLTRENLVTFAWLPPTCAYRLIGEGHDLPRWHPLLTGSKAAMHGERISVRHIAVRESEVVDWQDHILNKPSWAK</sequence>
<name>Y2083_YERPE</name>
<organism>
    <name type="scientific">Yersinia pestis</name>
    <dbReference type="NCBI Taxonomy" id="632"/>
    <lineage>
        <taxon>Bacteria</taxon>
        <taxon>Pseudomonadati</taxon>
        <taxon>Pseudomonadota</taxon>
        <taxon>Gammaproteobacteria</taxon>
        <taxon>Enterobacterales</taxon>
        <taxon>Yersiniaceae</taxon>
        <taxon>Yersinia</taxon>
    </lineage>
</organism>
<gene>
    <name type="ordered locus">YPO2083</name>
    <name type="ordered locus">y2228</name>
    <name type="ordered locus">YP_1926</name>
</gene>
<proteinExistence type="inferred from homology"/>
<feature type="chain" id="PRO_0000214599" description="UPF0260 protein YPO2083/y2228/YP_1926">
    <location>
        <begin position="1"/>
        <end position="148"/>
    </location>
</feature>
<dbReference type="EMBL" id="AL590842">
    <property type="protein sequence ID" value="CAL20718.1"/>
    <property type="molecule type" value="Genomic_DNA"/>
</dbReference>
<dbReference type="EMBL" id="AE009952">
    <property type="protein sequence ID" value="AAM85788.1"/>
    <property type="molecule type" value="Genomic_DNA"/>
</dbReference>
<dbReference type="EMBL" id="AE017042">
    <property type="protein sequence ID" value="AAS62144.1"/>
    <property type="molecule type" value="Genomic_DNA"/>
</dbReference>
<dbReference type="PIR" id="AC0254">
    <property type="entry name" value="AC0254"/>
</dbReference>
<dbReference type="RefSeq" id="WP_002211739.1">
    <property type="nucleotide sequence ID" value="NZ_WUCM01000062.1"/>
</dbReference>
<dbReference type="RefSeq" id="YP_002347065.1">
    <property type="nucleotide sequence ID" value="NC_003143.1"/>
</dbReference>
<dbReference type="IntAct" id="Q8ZES0">
    <property type="interactions" value="4"/>
</dbReference>
<dbReference type="STRING" id="214092.YPO2083"/>
<dbReference type="PaxDb" id="214092-YPO2083"/>
<dbReference type="DNASU" id="1147175"/>
<dbReference type="EnsemblBacteria" id="AAS62144">
    <property type="protein sequence ID" value="AAS62144"/>
    <property type="gene ID" value="YP_1926"/>
</dbReference>
<dbReference type="KEGG" id="ype:YPO2083"/>
<dbReference type="KEGG" id="ypk:y2228"/>
<dbReference type="KEGG" id="ypm:YP_1926"/>
<dbReference type="PATRIC" id="fig|214092.21.peg.2473"/>
<dbReference type="eggNOG" id="COG2983">
    <property type="taxonomic scope" value="Bacteria"/>
</dbReference>
<dbReference type="HOGENOM" id="CLU_109769_2_0_6"/>
<dbReference type="OMA" id="TCQCSDY"/>
<dbReference type="OrthoDB" id="9786855at2"/>
<dbReference type="Proteomes" id="UP000000815">
    <property type="component" value="Chromosome"/>
</dbReference>
<dbReference type="Proteomes" id="UP000001019">
    <property type="component" value="Chromosome"/>
</dbReference>
<dbReference type="Proteomes" id="UP000002490">
    <property type="component" value="Chromosome"/>
</dbReference>
<dbReference type="HAMAP" id="MF_00676">
    <property type="entry name" value="UPF0260"/>
    <property type="match status" value="1"/>
</dbReference>
<dbReference type="InterPro" id="IPR005358">
    <property type="entry name" value="Puta_zinc/iron-chelating_dom"/>
</dbReference>
<dbReference type="InterPro" id="IPR008228">
    <property type="entry name" value="UCP006173"/>
</dbReference>
<dbReference type="NCBIfam" id="NF003498">
    <property type="entry name" value="PRK05170.1-1"/>
    <property type="match status" value="1"/>
</dbReference>
<dbReference type="NCBIfam" id="NF003501">
    <property type="entry name" value="PRK05170.1-5"/>
    <property type="match status" value="1"/>
</dbReference>
<dbReference type="NCBIfam" id="NF003507">
    <property type="entry name" value="PRK05170.2-5"/>
    <property type="match status" value="1"/>
</dbReference>
<dbReference type="PANTHER" id="PTHR37421">
    <property type="entry name" value="UPF0260 PROTEIN YCGN"/>
    <property type="match status" value="1"/>
</dbReference>
<dbReference type="PANTHER" id="PTHR37421:SF1">
    <property type="entry name" value="UPF0260 PROTEIN YCGN"/>
    <property type="match status" value="1"/>
</dbReference>
<dbReference type="Pfam" id="PF03692">
    <property type="entry name" value="CxxCxxCC"/>
    <property type="match status" value="1"/>
</dbReference>
<dbReference type="PIRSF" id="PIRSF006173">
    <property type="entry name" value="UCP006173"/>
    <property type="match status" value="1"/>
</dbReference>